<reference key="1">
    <citation type="journal article" date="1991" name="Nature">
        <title>Cloning of a complementary DNA for a protein-tyrosine kinase that specifically phosphorylates a negative regulatory site of p60c-src.</title>
        <authorList>
            <person name="Nada S."/>
            <person name="Okada M."/>
            <person name="McAuley A."/>
            <person name="Cooper J.A."/>
            <person name="Nakagawa H."/>
        </authorList>
    </citation>
    <scope>NUCLEOTIDE SEQUENCE [MRNA]</scope>
    <scope>PARTIAL PROTEIN SEQUENCE</scope>
</reference>
<reference key="2">
    <citation type="journal article" date="2004" name="Genome Res.">
        <title>The status, quality, and expansion of the NIH full-length cDNA project: the Mammalian Gene Collection (MGC).</title>
        <authorList>
            <consortium name="The MGC Project Team"/>
        </authorList>
    </citation>
    <scope>NUCLEOTIDE SEQUENCE [LARGE SCALE MRNA]</scope>
    <source>
        <tissue>Thymus</tissue>
    </source>
</reference>
<reference key="3">
    <citation type="journal article" date="1991" name="J. Biol. Chem.">
        <title>CSK: a protein-tyrosine kinase involved in regulation of src family kinases.</title>
        <authorList>
            <person name="Okada M."/>
            <person name="Nada S."/>
            <person name="Yamanashi Y."/>
            <person name="Yamamoto T."/>
            <person name="Nakagawa H."/>
        </authorList>
    </citation>
    <scope>FUNCTION IN PHOSPHORYLATION OF LYN AND FYN</scope>
    <scope>CATALYTIC ACTIVITY</scope>
    <scope>COFACTOR</scope>
</reference>
<reference key="4">
    <citation type="journal article" date="1994" name="J. Biol. Chem.">
        <title>Regulation of c-Fgr protein kinase by c-Src kinase (CSK) and by polycationic effectors.</title>
        <authorList>
            <person name="Ruzzene M."/>
            <person name="James P."/>
            <person name="Brunati A.M."/>
            <person name="Donella-Deana A."/>
            <person name="Pinna L.A."/>
        </authorList>
    </citation>
    <scope>FUNCTION IN PHOSPHORYLATION OF FGR</scope>
</reference>
<reference key="5">
    <citation type="journal article" date="2000" name="Nature">
        <title>Transmembrane phosphoprotein Cbp regulates the activities of Src-family tyrosine kinases.</title>
        <authorList>
            <person name="Kawabuchi M."/>
            <person name="Satomi Y."/>
            <person name="Takao T."/>
            <person name="Shimonishi Y."/>
            <person name="Nada S."/>
            <person name="Nagai K."/>
            <person name="Tarakhovsky A."/>
            <person name="Okada M."/>
        </authorList>
    </citation>
    <scope>INTERACTION WITH PAG1</scope>
</reference>
<reference key="6">
    <citation type="journal article" date="2004" name="J. Biol. Chem.">
        <title>Mechanism of Csk-mediated down-regulation of Src family tyrosine kinases in epidermal growth factor signaling.</title>
        <authorList>
            <person name="Matsuoka H."/>
            <person name="Nada S."/>
            <person name="Okada M."/>
        </authorList>
    </citation>
    <scope>INTERACTION WITH PAG1</scope>
</reference>
<reference key="7">
    <citation type="journal article" date="2011" name="Proc. Natl. Acad. Sci. U.S.A.">
        <title>Mammalian Pragmin regulates Src family kinases via the Glu-Pro-Ile-Tyr-Ala (EPIYA) motif that is exploited by bacterial effectors.</title>
        <authorList>
            <person name="Safari F."/>
            <person name="Murata-Kamiya N."/>
            <person name="Saito Y."/>
            <person name="Hatakeyama M."/>
        </authorList>
    </citation>
    <scope>SUBCELLULAR LOCATION</scope>
    <scope>INTERACTION WITH PRAG1</scope>
    <scope>FUNCTION IN PHOSPHORYLATION OF PRAG1</scope>
</reference>
<accession>P32577</accession>
<accession>Q4G003</accession>
<dbReference type="EC" id="2.7.10.2" evidence="8 9"/>
<dbReference type="EMBL" id="X58631">
    <property type="protein sequence ID" value="CAA41484.1"/>
    <property type="molecule type" value="mRNA"/>
</dbReference>
<dbReference type="EMBL" id="BC098863">
    <property type="protein sequence ID" value="AAH98863.1"/>
    <property type="molecule type" value="mRNA"/>
</dbReference>
<dbReference type="PIR" id="S15094">
    <property type="entry name" value="S15094"/>
</dbReference>
<dbReference type="RefSeq" id="NP_001025210.1">
    <property type="nucleotide sequence ID" value="NM_001030039.2"/>
</dbReference>
<dbReference type="RefSeq" id="NP_001420692.1">
    <property type="nucleotide sequence ID" value="NM_001433763.1"/>
</dbReference>
<dbReference type="RefSeq" id="XP_006243225.1">
    <property type="nucleotide sequence ID" value="XM_006243163.1"/>
</dbReference>
<dbReference type="RefSeq" id="XP_006243226.1">
    <property type="nucleotide sequence ID" value="XM_006243164.3"/>
</dbReference>
<dbReference type="PDB" id="1K9A">
    <property type="method" value="X-ray"/>
    <property type="resolution" value="2.50 A"/>
    <property type="chains" value="A/B/C/D/E/F=1-450"/>
</dbReference>
<dbReference type="PDB" id="2RSY">
    <property type="method" value="NMR"/>
    <property type="chains" value="A=80-173"/>
</dbReference>
<dbReference type="PDBsum" id="1K9A"/>
<dbReference type="PDBsum" id="2RSY"/>
<dbReference type="BMRB" id="P32577"/>
<dbReference type="SMR" id="P32577"/>
<dbReference type="BioGRID" id="261119">
    <property type="interactions" value="6"/>
</dbReference>
<dbReference type="ELM" id="P32577"/>
<dbReference type="FunCoup" id="P32577">
    <property type="interactions" value="2321"/>
</dbReference>
<dbReference type="IntAct" id="P32577">
    <property type="interactions" value="20"/>
</dbReference>
<dbReference type="MINT" id="P32577"/>
<dbReference type="STRING" id="10116.ENSRNOP00000026358"/>
<dbReference type="BindingDB" id="P32577"/>
<dbReference type="ChEMBL" id="CHEMBL4365"/>
<dbReference type="iPTMnet" id="P32577"/>
<dbReference type="PhosphoSitePlus" id="P32577"/>
<dbReference type="jPOST" id="P32577"/>
<dbReference type="PaxDb" id="10116-ENSRNOP00000026358"/>
<dbReference type="Ensembl" id="ENSRNOT00000026358.7">
    <property type="protein sequence ID" value="ENSRNOP00000026358.5"/>
    <property type="gene ID" value="ENSRNOG00000019374.7"/>
</dbReference>
<dbReference type="GeneID" id="315707"/>
<dbReference type="KEGG" id="rno:315707"/>
<dbReference type="UCSC" id="RGD:1308800">
    <property type="organism name" value="rat"/>
</dbReference>
<dbReference type="AGR" id="RGD:1308800"/>
<dbReference type="CTD" id="1445"/>
<dbReference type="RGD" id="1308800">
    <property type="gene designation" value="Csk"/>
</dbReference>
<dbReference type="eggNOG" id="KOG0197">
    <property type="taxonomic scope" value="Eukaryota"/>
</dbReference>
<dbReference type="GeneTree" id="ENSGT00940000157431"/>
<dbReference type="HOGENOM" id="CLU_000288_7_2_1"/>
<dbReference type="InParanoid" id="P32577"/>
<dbReference type="OMA" id="PTMTTHS"/>
<dbReference type="OrthoDB" id="346907at2759"/>
<dbReference type="PhylomeDB" id="P32577"/>
<dbReference type="TreeFam" id="TF351634"/>
<dbReference type="BRENDA" id="2.7.10.2">
    <property type="organism ID" value="5301"/>
</dbReference>
<dbReference type="Reactome" id="R-RNO-180292">
    <property type="pathway name" value="GAB1 signalosome"/>
</dbReference>
<dbReference type="Reactome" id="R-RNO-202427">
    <property type="pathway name" value="Phosphorylation of CD3 and TCR zeta chains"/>
</dbReference>
<dbReference type="Reactome" id="R-RNO-354192">
    <property type="pathway name" value="Integrin signaling"/>
</dbReference>
<dbReference type="Reactome" id="R-RNO-389948">
    <property type="pathway name" value="Co-inhibition by PD-1"/>
</dbReference>
<dbReference type="Reactome" id="R-RNO-5674135">
    <property type="pathway name" value="MAP2K and MAPK activation"/>
</dbReference>
<dbReference type="Reactome" id="R-RNO-9013407">
    <property type="pathway name" value="RHOH GTPase cycle"/>
</dbReference>
<dbReference type="EvolutionaryTrace" id="P32577"/>
<dbReference type="PRO" id="PR:P32577"/>
<dbReference type="Proteomes" id="UP000002494">
    <property type="component" value="Chromosome 8"/>
</dbReference>
<dbReference type="Bgee" id="ENSRNOG00000019374">
    <property type="expression patterns" value="Expressed in spleen and 18 other cell types or tissues"/>
</dbReference>
<dbReference type="GO" id="GO:0005911">
    <property type="term" value="C:cell-cell junction"/>
    <property type="evidence" value="ECO:0000266"/>
    <property type="project" value="RGD"/>
</dbReference>
<dbReference type="GO" id="GO:0005737">
    <property type="term" value="C:cytoplasm"/>
    <property type="evidence" value="ECO:0000314"/>
    <property type="project" value="UniProtKB"/>
</dbReference>
<dbReference type="GO" id="GO:0005886">
    <property type="term" value="C:plasma membrane"/>
    <property type="evidence" value="ECO:0000266"/>
    <property type="project" value="RGD"/>
</dbReference>
<dbReference type="GO" id="GO:0005524">
    <property type="term" value="F:ATP binding"/>
    <property type="evidence" value="ECO:0007669"/>
    <property type="project" value="UniProtKB-KW"/>
</dbReference>
<dbReference type="GO" id="GO:0042802">
    <property type="term" value="F:identical protein binding"/>
    <property type="evidence" value="ECO:0000266"/>
    <property type="project" value="RGD"/>
</dbReference>
<dbReference type="GO" id="GO:0046872">
    <property type="term" value="F:metal ion binding"/>
    <property type="evidence" value="ECO:0007669"/>
    <property type="project" value="UniProtKB-KW"/>
</dbReference>
<dbReference type="GO" id="GO:0004715">
    <property type="term" value="F:non-membrane spanning protein tyrosine kinase activity"/>
    <property type="evidence" value="ECO:0000318"/>
    <property type="project" value="GO_Central"/>
</dbReference>
<dbReference type="GO" id="GO:0070064">
    <property type="term" value="F:proline-rich region binding"/>
    <property type="evidence" value="ECO:0000353"/>
    <property type="project" value="BHF-UCL"/>
</dbReference>
<dbReference type="GO" id="GO:0034236">
    <property type="term" value="F:protein kinase A catalytic subunit binding"/>
    <property type="evidence" value="ECO:0000266"/>
    <property type="project" value="RGD"/>
</dbReference>
<dbReference type="GO" id="GO:0019903">
    <property type="term" value="F:protein phosphatase binding"/>
    <property type="evidence" value="ECO:0000353"/>
    <property type="project" value="BHF-UCL"/>
</dbReference>
<dbReference type="GO" id="GO:0004713">
    <property type="term" value="F:protein tyrosine kinase activity"/>
    <property type="evidence" value="ECO:0000314"/>
    <property type="project" value="RGD"/>
</dbReference>
<dbReference type="GO" id="GO:1990782">
    <property type="term" value="F:protein tyrosine kinase binding"/>
    <property type="evidence" value="ECO:0000353"/>
    <property type="project" value="RGD"/>
</dbReference>
<dbReference type="GO" id="GO:0002250">
    <property type="term" value="P:adaptive immune response"/>
    <property type="evidence" value="ECO:0007669"/>
    <property type="project" value="UniProtKB-KW"/>
</dbReference>
<dbReference type="GO" id="GO:0034332">
    <property type="term" value="P:adherens junction organization"/>
    <property type="evidence" value="ECO:0000270"/>
    <property type="project" value="RGD"/>
</dbReference>
<dbReference type="GO" id="GO:0071375">
    <property type="term" value="P:cellular response to peptide hormone stimulus"/>
    <property type="evidence" value="ECO:0000314"/>
    <property type="project" value="RGD"/>
</dbReference>
<dbReference type="GO" id="GO:0035556">
    <property type="term" value="P:intracellular signal transduction"/>
    <property type="evidence" value="ECO:0007669"/>
    <property type="project" value="Ensembl"/>
</dbReference>
<dbReference type="GO" id="GO:0045779">
    <property type="term" value="P:negative regulation of bone resorption"/>
    <property type="evidence" value="ECO:0000314"/>
    <property type="project" value="RGD"/>
</dbReference>
<dbReference type="GO" id="GO:0008285">
    <property type="term" value="P:negative regulation of cell population proliferation"/>
    <property type="evidence" value="ECO:0000314"/>
    <property type="project" value="RGD"/>
</dbReference>
<dbReference type="GO" id="GO:0070373">
    <property type="term" value="P:negative regulation of ERK1 and ERK2 cascade"/>
    <property type="evidence" value="ECO:0000314"/>
    <property type="project" value="RGD"/>
</dbReference>
<dbReference type="GO" id="GO:0042997">
    <property type="term" value="P:negative regulation of Golgi to plasma membrane protein transport"/>
    <property type="evidence" value="ECO:0000266"/>
    <property type="project" value="RGD"/>
</dbReference>
<dbReference type="GO" id="GO:0032715">
    <property type="term" value="P:negative regulation of interleukin-6 production"/>
    <property type="evidence" value="ECO:0000314"/>
    <property type="project" value="RGD"/>
</dbReference>
<dbReference type="GO" id="GO:0010989">
    <property type="term" value="P:negative regulation of low-density lipoprotein particle clearance"/>
    <property type="evidence" value="ECO:0000314"/>
    <property type="project" value="RGD"/>
</dbReference>
<dbReference type="GO" id="GO:0050765">
    <property type="term" value="P:negative regulation of phagocytosis"/>
    <property type="evidence" value="ECO:0000314"/>
    <property type="project" value="RGD"/>
</dbReference>
<dbReference type="GO" id="GO:0050868">
    <property type="term" value="P:negative regulation of T cell activation"/>
    <property type="evidence" value="ECO:0007669"/>
    <property type="project" value="Ensembl"/>
</dbReference>
<dbReference type="GO" id="GO:0050860">
    <property type="term" value="P:negative regulation of T cell receptor signaling pathway"/>
    <property type="evidence" value="ECO:0007669"/>
    <property type="project" value="Ensembl"/>
</dbReference>
<dbReference type="GO" id="GO:0048709">
    <property type="term" value="P:oligodendrocyte differentiation"/>
    <property type="evidence" value="ECO:0000270"/>
    <property type="project" value="RGD"/>
</dbReference>
<dbReference type="GO" id="GO:0060368">
    <property type="term" value="P:regulation of Fc receptor mediated stimulatory signaling pathway"/>
    <property type="evidence" value="ECO:0000314"/>
    <property type="project" value="RGD"/>
</dbReference>
<dbReference type="CDD" id="cd05082">
    <property type="entry name" value="PTKc_Csk"/>
    <property type="match status" value="1"/>
</dbReference>
<dbReference type="CDD" id="cd09937">
    <property type="entry name" value="SH2_csk_like"/>
    <property type="match status" value="1"/>
</dbReference>
<dbReference type="CDD" id="cd11769">
    <property type="entry name" value="SH3_CSK"/>
    <property type="match status" value="1"/>
</dbReference>
<dbReference type="FunFam" id="1.10.510.10:FF:000272">
    <property type="entry name" value="Tyrosine-protein kinase"/>
    <property type="match status" value="1"/>
</dbReference>
<dbReference type="FunFam" id="2.30.30.40:FF:000146">
    <property type="entry name" value="Tyrosine-protein kinase"/>
    <property type="match status" value="1"/>
</dbReference>
<dbReference type="FunFam" id="3.30.200.20:FF:000053">
    <property type="entry name" value="Tyrosine-protein kinase"/>
    <property type="match status" value="1"/>
</dbReference>
<dbReference type="FunFam" id="3.30.505.10:FF:000023">
    <property type="entry name" value="Tyrosine-protein kinase"/>
    <property type="match status" value="1"/>
</dbReference>
<dbReference type="Gene3D" id="3.30.200.20">
    <property type="entry name" value="Phosphorylase Kinase, domain 1"/>
    <property type="match status" value="1"/>
</dbReference>
<dbReference type="Gene3D" id="3.30.505.10">
    <property type="entry name" value="SH2 domain"/>
    <property type="match status" value="1"/>
</dbReference>
<dbReference type="Gene3D" id="2.30.30.40">
    <property type="entry name" value="SH3 Domains"/>
    <property type="match status" value="1"/>
</dbReference>
<dbReference type="Gene3D" id="1.10.510.10">
    <property type="entry name" value="Transferase(Phosphotransferase) domain 1"/>
    <property type="match status" value="1"/>
</dbReference>
<dbReference type="InterPro" id="IPR035027">
    <property type="entry name" value="Csk-like_SH2"/>
</dbReference>
<dbReference type="InterPro" id="IPR011009">
    <property type="entry name" value="Kinase-like_dom_sf"/>
</dbReference>
<dbReference type="InterPro" id="IPR050198">
    <property type="entry name" value="Non-receptor_tyrosine_kinases"/>
</dbReference>
<dbReference type="InterPro" id="IPR000719">
    <property type="entry name" value="Prot_kinase_dom"/>
</dbReference>
<dbReference type="InterPro" id="IPR017441">
    <property type="entry name" value="Protein_kinase_ATP_BS"/>
</dbReference>
<dbReference type="InterPro" id="IPR001245">
    <property type="entry name" value="Ser-Thr/Tyr_kinase_cat_dom"/>
</dbReference>
<dbReference type="InterPro" id="IPR000980">
    <property type="entry name" value="SH2"/>
</dbReference>
<dbReference type="InterPro" id="IPR036860">
    <property type="entry name" value="SH2_dom_sf"/>
</dbReference>
<dbReference type="InterPro" id="IPR036028">
    <property type="entry name" value="SH3-like_dom_sf"/>
</dbReference>
<dbReference type="InterPro" id="IPR001452">
    <property type="entry name" value="SH3_domain"/>
</dbReference>
<dbReference type="InterPro" id="IPR008266">
    <property type="entry name" value="Tyr_kinase_AS"/>
</dbReference>
<dbReference type="InterPro" id="IPR020635">
    <property type="entry name" value="Tyr_kinase_cat_dom"/>
</dbReference>
<dbReference type="PANTHER" id="PTHR24418">
    <property type="entry name" value="TYROSINE-PROTEIN KINASE"/>
    <property type="match status" value="1"/>
</dbReference>
<dbReference type="Pfam" id="PF07714">
    <property type="entry name" value="PK_Tyr_Ser-Thr"/>
    <property type="match status" value="1"/>
</dbReference>
<dbReference type="Pfam" id="PF00017">
    <property type="entry name" value="SH2"/>
    <property type="match status" value="1"/>
</dbReference>
<dbReference type="Pfam" id="PF00018">
    <property type="entry name" value="SH3_1"/>
    <property type="match status" value="1"/>
</dbReference>
<dbReference type="PRINTS" id="PR00401">
    <property type="entry name" value="SH2DOMAIN"/>
</dbReference>
<dbReference type="PRINTS" id="PR00109">
    <property type="entry name" value="TYRKINASE"/>
</dbReference>
<dbReference type="SMART" id="SM00252">
    <property type="entry name" value="SH2"/>
    <property type="match status" value="1"/>
</dbReference>
<dbReference type="SMART" id="SM00326">
    <property type="entry name" value="SH3"/>
    <property type="match status" value="1"/>
</dbReference>
<dbReference type="SMART" id="SM00219">
    <property type="entry name" value="TyrKc"/>
    <property type="match status" value="1"/>
</dbReference>
<dbReference type="SUPFAM" id="SSF56112">
    <property type="entry name" value="Protein kinase-like (PK-like)"/>
    <property type="match status" value="1"/>
</dbReference>
<dbReference type="SUPFAM" id="SSF55550">
    <property type="entry name" value="SH2 domain"/>
    <property type="match status" value="1"/>
</dbReference>
<dbReference type="SUPFAM" id="SSF50044">
    <property type="entry name" value="SH3-domain"/>
    <property type="match status" value="1"/>
</dbReference>
<dbReference type="PROSITE" id="PS00107">
    <property type="entry name" value="PROTEIN_KINASE_ATP"/>
    <property type="match status" value="1"/>
</dbReference>
<dbReference type="PROSITE" id="PS50011">
    <property type="entry name" value="PROTEIN_KINASE_DOM"/>
    <property type="match status" value="1"/>
</dbReference>
<dbReference type="PROSITE" id="PS00109">
    <property type="entry name" value="PROTEIN_KINASE_TYR"/>
    <property type="match status" value="1"/>
</dbReference>
<dbReference type="PROSITE" id="PS50001">
    <property type="entry name" value="SH2"/>
    <property type="match status" value="1"/>
</dbReference>
<dbReference type="PROSITE" id="PS50002">
    <property type="entry name" value="SH3"/>
    <property type="match status" value="1"/>
</dbReference>
<sequence length="450" mass="50746">MSAIQASWPSGTECIAKYNFHGTAEQDLPFCKGDVLTIVAVTKDPNWYKAKNKVGREGIIPANYVQKREGVKAGTKLSLMPWFHGKITREQAERLLYPPETGLFLVRESTNYPGDYTLCVSCEGKVEHYRIMYHASKLSIDEEVYFENLMQLVEHYTTDADGLCTRLIKPKVMEGTVAAQDEFYRSGWALNMKELKLLQTIGKGEFGDVMLGDYRGNKVAVKCIKNDATAQAFLAEASVMTQLRHSNLVQLLGVIVEEKGGLYIVTEYMAKGSLVDYLRSRGRSVLGGDCLLKFSLDVCEAMEYLEGNNFVHRDLAARNVLVSEDNVAKVSDFGLTKEASSTQDTGKLPVKWTAPEALREKKFSTKSDVWSFGILLWEIYSFGRVPYPRIPLKDVVPRVEKGYKMDAPDGCPPAVYDVMKNCWHLDAATRPTFLQLREQLEHIRTHELHL</sequence>
<gene>
    <name type="primary">Csk</name>
</gene>
<organism>
    <name type="scientific">Rattus norvegicus</name>
    <name type="common">Rat</name>
    <dbReference type="NCBI Taxonomy" id="10116"/>
    <lineage>
        <taxon>Eukaryota</taxon>
        <taxon>Metazoa</taxon>
        <taxon>Chordata</taxon>
        <taxon>Craniata</taxon>
        <taxon>Vertebrata</taxon>
        <taxon>Euteleostomi</taxon>
        <taxon>Mammalia</taxon>
        <taxon>Eutheria</taxon>
        <taxon>Euarchontoglires</taxon>
        <taxon>Glires</taxon>
        <taxon>Rodentia</taxon>
        <taxon>Myomorpha</taxon>
        <taxon>Muroidea</taxon>
        <taxon>Muridae</taxon>
        <taxon>Murinae</taxon>
        <taxon>Rattus</taxon>
    </lineage>
</organism>
<comment type="function">
    <text evidence="1 8 9 10">Non-receptor tyrosine-protein kinase that plays an important role in the regulation of cell growth, differentiation, migration and immune response. Phosphorylates tyrosine residues located in the C-terminal tails of Src-family kinases (SFKs) including LCK, SRC, HCK, FYN, LYN, CSK or YES1. Upon tail phosphorylation, Src-family members engage in intramolecular interactions between the phosphotyrosine tail and the SH2 domain that result in an inactive conformation. To inhibit SFKs, CSK is recruited to the plasma membrane via binding to transmembrane proteins or adapter proteins located near the plasma membrane. Suppresses signaling by various surface receptors, including T-cell receptor (TCR) and B-cell receptor (BCR) by phosphorylating and maintaining inactive several positive effectors such as FYN or LCK (By similarity).</text>
</comment>
<comment type="catalytic activity">
    <reaction evidence="7 8 9">
        <text>L-tyrosyl-[protein] + ATP = O-phospho-L-tyrosyl-[protein] + ADP + H(+)</text>
        <dbReference type="Rhea" id="RHEA:10596"/>
        <dbReference type="Rhea" id="RHEA-COMP:10136"/>
        <dbReference type="Rhea" id="RHEA-COMP:20101"/>
        <dbReference type="ChEBI" id="CHEBI:15378"/>
        <dbReference type="ChEBI" id="CHEBI:30616"/>
        <dbReference type="ChEBI" id="CHEBI:46858"/>
        <dbReference type="ChEBI" id="CHEBI:61978"/>
        <dbReference type="ChEBI" id="CHEBI:456216"/>
        <dbReference type="EC" id="2.7.10.2"/>
    </reaction>
</comment>
<comment type="cofactor">
    <cofactor evidence="8">
        <name>Mn(2+)</name>
        <dbReference type="ChEBI" id="CHEBI:29035"/>
    </cofactor>
    <cofactor evidence="2">
        <name>Mg(2+)</name>
        <dbReference type="ChEBI" id="CHEBI:18420"/>
    </cofactor>
</comment>
<comment type="subunit">
    <text evidence="2 3 9">Homodimer (via SH3-domain). Interacts with PTPN22. Interacts with phosphorylated SIT1, PAG1, LIME1 and TGFB1I1; these interactions serve to recruit CSK to the membrane where it can phosphorylate and inhibit Src-family kinases. Interacts with SRCIN1. Interacts with RHOH. Interacts (via SH2 domain) with SCIMP; this interaction is dependent on phosphorylation of SCIMP 'Tyr-96' (By similarity). Interacts (via SH2 domain) with PRAG1 (when phosphorylated at 'Tyr-391'); this interaction prevents translocation of CSK from the cytoplasm to the membrane leading to increased activity of CSK (PubMed:21873224). Interacts with LRRK1 (By similarity).</text>
</comment>
<comment type="subcellular location">
    <subcellularLocation>
        <location evidence="9">Cytoplasm</location>
    </subcellularLocation>
    <subcellularLocation>
        <location evidence="1">Cell membrane</location>
    </subcellularLocation>
    <text evidence="1">Mainly cytoplasmic, also present in lipid rafts.</text>
</comment>
<comment type="tissue specificity">
    <text>Enriched in lymphoid tissues.</text>
</comment>
<comment type="domain">
    <text evidence="1">The architecture of this protein is similar to that of Src-family kinases (SFKs) with one N-terminal SH3 domain, one SH2 domain, and a C-terminal kinase domain.</text>
</comment>
<comment type="PTM">
    <text evidence="1">Phosphorylated at Ser-364 by PKA, leading to increased activity. Autophosphorylated (By similarity).</text>
</comment>
<comment type="similarity">
    <text evidence="4">Belongs to the protein kinase superfamily. Tyr protein kinase family. CSK subfamily.</text>
</comment>
<proteinExistence type="evidence at protein level"/>
<protein>
    <recommendedName>
        <fullName>Tyrosine-protein kinase CSK</fullName>
        <ecNumber evidence="8 9">2.7.10.2</ecNumber>
    </recommendedName>
    <alternativeName>
        <fullName>C-Src kinase</fullName>
    </alternativeName>
</protein>
<feature type="initiator methionine" description="Removed" evidence="2">
    <location>
        <position position="1"/>
    </location>
</feature>
<feature type="chain" id="PRO_0000088072" description="Tyrosine-protein kinase CSK">
    <location>
        <begin position="2"/>
        <end position="450"/>
    </location>
</feature>
<feature type="domain" description="SH3" evidence="6">
    <location>
        <begin position="9"/>
        <end position="70"/>
    </location>
</feature>
<feature type="domain" description="SH2" evidence="5">
    <location>
        <begin position="82"/>
        <end position="171"/>
    </location>
</feature>
<feature type="domain" description="Protein kinase" evidence="4">
    <location>
        <begin position="195"/>
        <end position="445"/>
    </location>
</feature>
<feature type="region of interest" description="Interaction with PTPN22" evidence="2">
    <location>
        <begin position="9"/>
        <end position="70"/>
    </location>
</feature>
<feature type="active site" description="Proton acceptor" evidence="4 7">
    <location>
        <position position="314"/>
    </location>
</feature>
<feature type="binding site" evidence="4">
    <location>
        <begin position="201"/>
        <end position="209"/>
    </location>
    <ligand>
        <name>ATP</name>
        <dbReference type="ChEBI" id="CHEBI:30616"/>
    </ligand>
</feature>
<feature type="binding site" evidence="4">
    <location>
        <position position="222"/>
    </location>
    <ligand>
        <name>ATP</name>
        <dbReference type="ChEBI" id="CHEBI:30616"/>
    </ligand>
</feature>
<feature type="modified residue" description="N-acetylserine" evidence="2">
    <location>
        <position position="2"/>
    </location>
</feature>
<feature type="modified residue" description="Phosphotyrosine" evidence="2">
    <location>
        <position position="184"/>
    </location>
</feature>
<feature type="modified residue" description="Phosphotyrosine" evidence="2">
    <location>
        <position position="304"/>
    </location>
</feature>
<feature type="modified residue" description="Phosphoserine; by PKA" evidence="2">
    <location>
        <position position="364"/>
    </location>
</feature>
<feature type="modified residue" description="Phosphotyrosine; by autocatalysis" evidence="2">
    <location>
        <position position="416"/>
    </location>
</feature>
<feature type="strand" evidence="11">
    <location>
        <begin position="13"/>
        <end position="18"/>
    </location>
</feature>
<feature type="strand" evidence="11">
    <location>
        <begin position="23"/>
        <end position="27"/>
    </location>
</feature>
<feature type="strand" evidence="11">
    <location>
        <begin position="35"/>
        <end position="41"/>
    </location>
</feature>
<feature type="strand" evidence="11">
    <location>
        <begin position="47"/>
        <end position="51"/>
    </location>
</feature>
<feature type="strand" evidence="11">
    <location>
        <begin position="57"/>
        <end position="61"/>
    </location>
</feature>
<feature type="helix" evidence="11">
    <location>
        <begin position="62"/>
        <end position="64"/>
    </location>
</feature>
<feature type="strand" evidence="11">
    <location>
        <begin position="65"/>
        <end position="67"/>
    </location>
</feature>
<feature type="strand" evidence="11">
    <location>
        <begin position="77"/>
        <end position="79"/>
    </location>
</feature>
<feature type="helix" evidence="11">
    <location>
        <begin position="89"/>
        <end position="95"/>
    </location>
</feature>
<feature type="strand" evidence="11">
    <location>
        <begin position="103"/>
        <end position="108"/>
    </location>
</feature>
<feature type="strand" evidence="11">
    <location>
        <begin position="110"/>
        <end position="112"/>
    </location>
</feature>
<feature type="strand" evidence="11">
    <location>
        <begin position="115"/>
        <end position="121"/>
    </location>
</feature>
<feature type="strand" evidence="11">
    <location>
        <begin position="123"/>
        <end position="134"/>
    </location>
</feature>
<feature type="strand" evidence="11">
    <location>
        <begin position="137"/>
        <end position="144"/>
    </location>
</feature>
<feature type="strand" evidence="11">
    <location>
        <begin position="146"/>
        <end position="148"/>
    </location>
</feature>
<feature type="helix" evidence="11">
    <location>
        <begin position="149"/>
        <end position="158"/>
    </location>
</feature>
<feature type="strand" evidence="11">
    <location>
        <begin position="163"/>
        <end position="165"/>
    </location>
</feature>
<feature type="helix" evidence="11">
    <location>
        <begin position="179"/>
        <end position="185"/>
    </location>
</feature>
<feature type="helix" evidence="11">
    <location>
        <begin position="192"/>
        <end position="194"/>
    </location>
</feature>
<feature type="strand" evidence="11">
    <location>
        <begin position="195"/>
        <end position="203"/>
    </location>
</feature>
<feature type="strand" evidence="11">
    <location>
        <begin position="205"/>
        <end position="214"/>
    </location>
</feature>
<feature type="strand" evidence="11">
    <location>
        <begin position="217"/>
        <end position="226"/>
    </location>
</feature>
<feature type="helix" evidence="11">
    <location>
        <begin position="231"/>
        <end position="241"/>
    </location>
</feature>
<feature type="strand" evidence="11">
    <location>
        <begin position="251"/>
        <end position="256"/>
    </location>
</feature>
<feature type="strand" evidence="11">
    <location>
        <begin position="262"/>
        <end position="267"/>
    </location>
</feature>
<feature type="helix" evidence="11">
    <location>
        <begin position="274"/>
        <end position="281"/>
    </location>
</feature>
<feature type="turn" evidence="11">
    <location>
        <begin position="283"/>
        <end position="285"/>
    </location>
</feature>
<feature type="helix" evidence="11">
    <location>
        <begin position="288"/>
        <end position="307"/>
    </location>
</feature>
<feature type="helix" evidence="11">
    <location>
        <begin position="317"/>
        <end position="319"/>
    </location>
</feature>
<feature type="strand" evidence="11">
    <location>
        <begin position="320"/>
        <end position="322"/>
    </location>
</feature>
<feature type="strand" evidence="11">
    <location>
        <begin position="328"/>
        <end position="330"/>
    </location>
</feature>
<feature type="turn" evidence="11">
    <location>
        <begin position="350"/>
        <end position="352"/>
    </location>
</feature>
<feature type="helix" evidence="11">
    <location>
        <begin position="355"/>
        <end position="359"/>
    </location>
</feature>
<feature type="helix" evidence="11">
    <location>
        <begin position="365"/>
        <end position="380"/>
    </location>
</feature>
<feature type="turn" evidence="11">
    <location>
        <begin position="381"/>
        <end position="383"/>
    </location>
</feature>
<feature type="turn" evidence="11">
    <location>
        <begin position="392"/>
        <end position="394"/>
    </location>
</feature>
<feature type="helix" evidence="11">
    <location>
        <begin position="395"/>
        <end position="400"/>
    </location>
</feature>
<feature type="helix" evidence="11">
    <location>
        <begin position="413"/>
        <end position="422"/>
    </location>
</feature>
<feature type="helix" evidence="11">
    <location>
        <begin position="427"/>
        <end position="429"/>
    </location>
</feature>
<feature type="helix" evidence="11">
    <location>
        <begin position="433"/>
        <end position="445"/>
    </location>
</feature>
<feature type="turn" evidence="11">
    <location>
        <begin position="446"/>
        <end position="449"/>
    </location>
</feature>
<name>CSK_RAT</name>
<evidence type="ECO:0000250" key="1"/>
<evidence type="ECO:0000250" key="2">
    <source>
        <dbReference type="UniProtKB" id="P41240"/>
    </source>
</evidence>
<evidence type="ECO:0000250" key="3">
    <source>
        <dbReference type="UniProtKB" id="P41241"/>
    </source>
</evidence>
<evidence type="ECO:0000255" key="4">
    <source>
        <dbReference type="PROSITE-ProRule" id="PRU00159"/>
    </source>
</evidence>
<evidence type="ECO:0000255" key="5">
    <source>
        <dbReference type="PROSITE-ProRule" id="PRU00191"/>
    </source>
</evidence>
<evidence type="ECO:0000255" key="6">
    <source>
        <dbReference type="PROSITE-ProRule" id="PRU00192"/>
    </source>
</evidence>
<evidence type="ECO:0000255" key="7">
    <source>
        <dbReference type="PROSITE-ProRule" id="PRU10028"/>
    </source>
</evidence>
<evidence type="ECO:0000269" key="8">
    <source>
    </source>
</evidence>
<evidence type="ECO:0000269" key="9">
    <source>
    </source>
</evidence>
<evidence type="ECO:0000269" key="10">
    <source>
    </source>
</evidence>
<evidence type="ECO:0007829" key="11">
    <source>
        <dbReference type="PDB" id="1K9A"/>
    </source>
</evidence>
<keyword id="KW-0002">3D-structure</keyword>
<keyword id="KW-0007">Acetylation</keyword>
<keyword id="KW-1064">Adaptive immunity</keyword>
<keyword id="KW-0067">ATP-binding</keyword>
<keyword id="KW-1003">Cell membrane</keyword>
<keyword id="KW-0963">Cytoplasm</keyword>
<keyword id="KW-0903">Direct protein sequencing</keyword>
<keyword id="KW-0391">Immunity</keyword>
<keyword id="KW-0418">Kinase</keyword>
<keyword id="KW-0460">Magnesium</keyword>
<keyword id="KW-0464">Manganese</keyword>
<keyword id="KW-0472">Membrane</keyword>
<keyword id="KW-0479">Metal-binding</keyword>
<keyword id="KW-0547">Nucleotide-binding</keyword>
<keyword id="KW-0597">Phosphoprotein</keyword>
<keyword id="KW-1185">Reference proteome</keyword>
<keyword id="KW-0727">SH2 domain</keyword>
<keyword id="KW-0728">SH3 domain</keyword>
<keyword id="KW-0808">Transferase</keyword>
<keyword id="KW-0829">Tyrosine-protein kinase</keyword>